<name>DADA_SALTI</name>
<evidence type="ECO:0000250" key="1"/>
<evidence type="ECO:0000255" key="2">
    <source>
        <dbReference type="HAMAP-Rule" id="MF_01202"/>
    </source>
</evidence>
<dbReference type="EC" id="1.4.99.-" evidence="2"/>
<dbReference type="EMBL" id="AL513382">
    <property type="protein sequence ID" value="CAD05486.1"/>
    <property type="molecule type" value="Genomic_DNA"/>
</dbReference>
<dbReference type="EMBL" id="AE014613">
    <property type="protein sequence ID" value="AAO68740.1"/>
    <property type="molecule type" value="Genomic_DNA"/>
</dbReference>
<dbReference type="RefSeq" id="NP_456310.1">
    <property type="nucleotide sequence ID" value="NC_003198.1"/>
</dbReference>
<dbReference type="RefSeq" id="WP_001266934.1">
    <property type="nucleotide sequence ID" value="NZ_WSUR01000004.1"/>
</dbReference>
<dbReference type="SMR" id="Q8Z687"/>
<dbReference type="STRING" id="220341.gene:17585851"/>
<dbReference type="KEGG" id="stt:t1074"/>
<dbReference type="KEGG" id="sty:STY1931"/>
<dbReference type="PATRIC" id="fig|220341.7.peg.1948"/>
<dbReference type="eggNOG" id="COG0665">
    <property type="taxonomic scope" value="Bacteria"/>
</dbReference>
<dbReference type="HOGENOM" id="CLU_007884_9_2_6"/>
<dbReference type="OMA" id="YSITFKM"/>
<dbReference type="OrthoDB" id="9805337at2"/>
<dbReference type="UniPathway" id="UPA00043">
    <property type="reaction ID" value="UER00498"/>
</dbReference>
<dbReference type="Proteomes" id="UP000000541">
    <property type="component" value="Chromosome"/>
</dbReference>
<dbReference type="Proteomes" id="UP000002670">
    <property type="component" value="Chromosome"/>
</dbReference>
<dbReference type="GO" id="GO:0005737">
    <property type="term" value="C:cytoplasm"/>
    <property type="evidence" value="ECO:0007669"/>
    <property type="project" value="TreeGrafter"/>
</dbReference>
<dbReference type="GO" id="GO:0005886">
    <property type="term" value="C:plasma membrane"/>
    <property type="evidence" value="ECO:0007669"/>
    <property type="project" value="UniProtKB-SubCell"/>
</dbReference>
<dbReference type="GO" id="GO:0008718">
    <property type="term" value="F:D-amino-acid dehydrogenase activity"/>
    <property type="evidence" value="ECO:0007669"/>
    <property type="project" value="UniProtKB-UniRule"/>
</dbReference>
<dbReference type="GO" id="GO:0055130">
    <property type="term" value="P:D-alanine catabolic process"/>
    <property type="evidence" value="ECO:0007669"/>
    <property type="project" value="UniProtKB-UniPathway"/>
</dbReference>
<dbReference type="FunFam" id="3.50.50.60:FF:000020">
    <property type="entry name" value="D-amino acid dehydrogenase"/>
    <property type="match status" value="1"/>
</dbReference>
<dbReference type="Gene3D" id="3.30.9.10">
    <property type="entry name" value="D-Amino Acid Oxidase, subunit A, domain 2"/>
    <property type="match status" value="1"/>
</dbReference>
<dbReference type="Gene3D" id="3.50.50.60">
    <property type="entry name" value="FAD/NAD(P)-binding domain"/>
    <property type="match status" value="2"/>
</dbReference>
<dbReference type="HAMAP" id="MF_01202">
    <property type="entry name" value="DadA"/>
    <property type="match status" value="1"/>
</dbReference>
<dbReference type="InterPro" id="IPR023080">
    <property type="entry name" value="DadA"/>
</dbReference>
<dbReference type="InterPro" id="IPR006076">
    <property type="entry name" value="FAD-dep_OxRdtase"/>
</dbReference>
<dbReference type="InterPro" id="IPR036188">
    <property type="entry name" value="FAD/NAD-bd_sf"/>
</dbReference>
<dbReference type="NCBIfam" id="NF001933">
    <property type="entry name" value="PRK00711.1"/>
    <property type="match status" value="1"/>
</dbReference>
<dbReference type="PANTHER" id="PTHR13847:SF280">
    <property type="entry name" value="D-AMINO ACID DEHYDROGENASE"/>
    <property type="match status" value="1"/>
</dbReference>
<dbReference type="PANTHER" id="PTHR13847">
    <property type="entry name" value="SARCOSINE DEHYDROGENASE-RELATED"/>
    <property type="match status" value="1"/>
</dbReference>
<dbReference type="Pfam" id="PF01266">
    <property type="entry name" value="DAO"/>
    <property type="match status" value="1"/>
</dbReference>
<dbReference type="SUPFAM" id="SSF54373">
    <property type="entry name" value="FAD-linked reductases, C-terminal domain"/>
    <property type="match status" value="1"/>
</dbReference>
<dbReference type="SUPFAM" id="SSF51905">
    <property type="entry name" value="FAD/NAD(P)-binding domain"/>
    <property type="match status" value="1"/>
</dbReference>
<comment type="function">
    <text evidence="2">Oxidative deamination of D-amino acids.</text>
</comment>
<comment type="catalytic activity">
    <reaction evidence="2">
        <text>a D-alpha-amino acid + A + H2O = a 2-oxocarboxylate + AH2 + NH4(+)</text>
        <dbReference type="Rhea" id="RHEA:18125"/>
        <dbReference type="ChEBI" id="CHEBI:13193"/>
        <dbReference type="ChEBI" id="CHEBI:15377"/>
        <dbReference type="ChEBI" id="CHEBI:17499"/>
        <dbReference type="ChEBI" id="CHEBI:28938"/>
        <dbReference type="ChEBI" id="CHEBI:35179"/>
        <dbReference type="ChEBI" id="CHEBI:59871"/>
    </reaction>
</comment>
<comment type="cofactor">
    <cofactor evidence="2">
        <name>FAD</name>
        <dbReference type="ChEBI" id="CHEBI:57692"/>
    </cofactor>
</comment>
<comment type="pathway">
    <text>Amino-acid degradation; D-alanine degradation; NH(3) and pyruvate from D-alanine: step 1/1.</text>
</comment>
<comment type="subcellular location">
    <subcellularLocation>
        <location evidence="1">Cell inner membrane</location>
        <topology evidence="1">Peripheral membrane protein</topology>
    </subcellularLocation>
</comment>
<comment type="similarity">
    <text evidence="2">Belongs to the DadA oxidoreductase family.</text>
</comment>
<proteinExistence type="inferred from homology"/>
<feature type="chain" id="PRO_0000166149" description="D-amino acid dehydrogenase">
    <location>
        <begin position="1"/>
        <end position="432"/>
    </location>
</feature>
<feature type="binding site" evidence="2">
    <location>
        <begin position="3"/>
        <end position="17"/>
    </location>
    <ligand>
        <name>FAD</name>
        <dbReference type="ChEBI" id="CHEBI:57692"/>
    </ligand>
</feature>
<organism>
    <name type="scientific">Salmonella typhi</name>
    <dbReference type="NCBI Taxonomy" id="90370"/>
    <lineage>
        <taxon>Bacteria</taxon>
        <taxon>Pseudomonadati</taxon>
        <taxon>Pseudomonadota</taxon>
        <taxon>Gammaproteobacteria</taxon>
        <taxon>Enterobacterales</taxon>
        <taxon>Enterobacteriaceae</taxon>
        <taxon>Salmonella</taxon>
    </lineage>
</organism>
<sequence length="432" mass="47952">MRVVILGSGVVGVTSAWYLSQAGHDVTVIDRESGPAQETSAANAGQISPGYAAPWAAPGVPLKAIKWMFQRHAPLAVRLDGTPFQLKWMWQMLRNCDTRHYMENKGRMVRLAEYSRDCLKTLRAATGIEYEGRQGGTLQLFRTAQQYENATRDIAVLEDAGVPYQLLEASRLAEVEPALAEVAHKLTGGLRLPNDETGDCQLFTQRLARMAEQAGVTFRFNTPVEKLLYENDQIYGVKCADEIIKADAYVMAFGSYSTAMLKGIVDIPVYPLKGYSLTIPIVEPDGAPVSTILDETYKIAITRFDKRIRVGGMAEIVGFNTDLLQPRRETLEMVVRDLFPRGGHIEQATFWTGLRPMTPDGTPVVGRTRYKNLWLNTGHGTLGWTMACGSGQLLSDILLGRTPAIPYDDLSVARYRSDFTPTRPQRLHSAHN</sequence>
<keyword id="KW-0997">Cell inner membrane</keyword>
<keyword id="KW-1003">Cell membrane</keyword>
<keyword id="KW-0274">FAD</keyword>
<keyword id="KW-0285">Flavoprotein</keyword>
<keyword id="KW-0472">Membrane</keyword>
<keyword id="KW-0560">Oxidoreductase</keyword>
<accession>Q8Z687</accession>
<reference key="1">
    <citation type="journal article" date="2001" name="Nature">
        <title>Complete genome sequence of a multiple drug resistant Salmonella enterica serovar Typhi CT18.</title>
        <authorList>
            <person name="Parkhill J."/>
            <person name="Dougan G."/>
            <person name="James K.D."/>
            <person name="Thomson N.R."/>
            <person name="Pickard D."/>
            <person name="Wain J."/>
            <person name="Churcher C.M."/>
            <person name="Mungall K.L."/>
            <person name="Bentley S.D."/>
            <person name="Holden M.T.G."/>
            <person name="Sebaihia M."/>
            <person name="Baker S."/>
            <person name="Basham D."/>
            <person name="Brooks K."/>
            <person name="Chillingworth T."/>
            <person name="Connerton P."/>
            <person name="Cronin A."/>
            <person name="Davis P."/>
            <person name="Davies R.M."/>
            <person name="Dowd L."/>
            <person name="White N."/>
            <person name="Farrar J."/>
            <person name="Feltwell T."/>
            <person name="Hamlin N."/>
            <person name="Haque A."/>
            <person name="Hien T.T."/>
            <person name="Holroyd S."/>
            <person name="Jagels K."/>
            <person name="Krogh A."/>
            <person name="Larsen T.S."/>
            <person name="Leather S."/>
            <person name="Moule S."/>
            <person name="O'Gaora P."/>
            <person name="Parry C."/>
            <person name="Quail M.A."/>
            <person name="Rutherford K.M."/>
            <person name="Simmonds M."/>
            <person name="Skelton J."/>
            <person name="Stevens K."/>
            <person name="Whitehead S."/>
            <person name="Barrell B.G."/>
        </authorList>
    </citation>
    <scope>NUCLEOTIDE SEQUENCE [LARGE SCALE GENOMIC DNA]</scope>
    <source>
        <strain>CT18</strain>
    </source>
</reference>
<reference key="2">
    <citation type="journal article" date="2003" name="J. Bacteriol.">
        <title>Comparative genomics of Salmonella enterica serovar Typhi strains Ty2 and CT18.</title>
        <authorList>
            <person name="Deng W."/>
            <person name="Liou S.-R."/>
            <person name="Plunkett G. III"/>
            <person name="Mayhew G.F."/>
            <person name="Rose D.J."/>
            <person name="Burland V."/>
            <person name="Kodoyianni V."/>
            <person name="Schwartz D.C."/>
            <person name="Blattner F.R."/>
        </authorList>
    </citation>
    <scope>NUCLEOTIDE SEQUENCE [LARGE SCALE GENOMIC DNA]</scope>
    <source>
        <strain>ATCC 700931 / Ty2</strain>
    </source>
</reference>
<protein>
    <recommendedName>
        <fullName evidence="2">D-amino acid dehydrogenase</fullName>
        <ecNumber evidence="2">1.4.99.-</ecNumber>
    </recommendedName>
</protein>
<gene>
    <name evidence="2" type="primary">dadA</name>
    <name type="ordered locus">STY1931</name>
    <name type="ordered locus">t1074</name>
</gene>